<sequence length="315" mass="33369">MAKSQIALCCMSHSPLLNLPGPAQELLDEIDKAIAAARDFVAEFDPELVVTFSPDHYNGFFYRAMPPFCIGTAAEGVGDYGTHEGPLDVPSDLATDCARAVLDHDVDVALSAAMDVDHGTVQPLQKLFGDATAKPVIPVFINSVATPLGPIRRVRALGAAVGAHLATLGKRVLVIGSGGLSHDPPVPTLATAPPAALDRIVRGVPMTTDQRQARQTAVIEAAREFASGRGTLAPLNPDWDRAFLDIVDSGRLAEVDGWDNGWIAEQAGNSAHEVRTWIAAFAALAAQGEYVTENRFYRAAPELIAGFAIRTAVTT</sequence>
<feature type="chain" id="PRO_0000337653" description="2,3-dihydroxyphenylpropionate/2,3-dihydroxicinnamic acid 1,2-dioxygenase">
    <location>
        <begin position="1"/>
        <end position="315"/>
    </location>
</feature>
<feature type="active site" description="Proton donor" evidence="1">
    <location>
        <position position="118"/>
    </location>
</feature>
<feature type="active site" description="Proton acceptor" evidence="1">
    <location>
        <position position="182"/>
    </location>
</feature>
<organism>
    <name type="scientific">Mycolicibacterium gilvum (strain PYR-GCK)</name>
    <name type="common">Mycobacterium gilvum (strain PYR-GCK)</name>
    <dbReference type="NCBI Taxonomy" id="350054"/>
    <lineage>
        <taxon>Bacteria</taxon>
        <taxon>Bacillati</taxon>
        <taxon>Actinomycetota</taxon>
        <taxon>Actinomycetes</taxon>
        <taxon>Mycobacteriales</taxon>
        <taxon>Mycobacteriaceae</taxon>
        <taxon>Mycolicibacterium</taxon>
    </lineage>
</organism>
<accession>A4T8B7</accession>
<keyword id="KW-0058">Aromatic hydrocarbons catabolism</keyword>
<keyword id="KW-0223">Dioxygenase</keyword>
<keyword id="KW-0408">Iron</keyword>
<keyword id="KW-0560">Oxidoreductase</keyword>
<dbReference type="EC" id="1.13.11.16" evidence="1"/>
<dbReference type="EMBL" id="CP000656">
    <property type="protein sequence ID" value="ABP44879.1"/>
    <property type="molecule type" value="Genomic_DNA"/>
</dbReference>
<dbReference type="SMR" id="A4T8B7"/>
<dbReference type="STRING" id="350054.Mflv_2402"/>
<dbReference type="KEGG" id="mgi:Mflv_2402"/>
<dbReference type="eggNOG" id="COG3384">
    <property type="taxonomic scope" value="Bacteria"/>
</dbReference>
<dbReference type="HOGENOM" id="CLU_078149_0_0_11"/>
<dbReference type="OrthoDB" id="8673673at2"/>
<dbReference type="UniPathway" id="UPA00714"/>
<dbReference type="GO" id="GO:0047070">
    <property type="term" value="F:3-carboxyethylcatechol 2,3-dioxygenase activity"/>
    <property type="evidence" value="ECO:0007669"/>
    <property type="project" value="UniProtKB-UniRule"/>
</dbReference>
<dbReference type="GO" id="GO:0008198">
    <property type="term" value="F:ferrous iron binding"/>
    <property type="evidence" value="ECO:0007669"/>
    <property type="project" value="InterPro"/>
</dbReference>
<dbReference type="GO" id="GO:0019380">
    <property type="term" value="P:3-phenylpropionate catabolic process"/>
    <property type="evidence" value="ECO:0007669"/>
    <property type="project" value="UniProtKB-UniRule"/>
</dbReference>
<dbReference type="CDD" id="cd07365">
    <property type="entry name" value="MhpB_like"/>
    <property type="match status" value="1"/>
</dbReference>
<dbReference type="Gene3D" id="3.40.830.10">
    <property type="entry name" value="LigB-like"/>
    <property type="match status" value="1"/>
</dbReference>
<dbReference type="HAMAP" id="MF_01653">
    <property type="entry name" value="MhpB"/>
    <property type="match status" value="1"/>
</dbReference>
<dbReference type="InterPro" id="IPR023789">
    <property type="entry name" value="DHPP/DHXA_dioxygenase"/>
</dbReference>
<dbReference type="InterPro" id="IPR004183">
    <property type="entry name" value="Xdiol_dOase_suB"/>
</dbReference>
<dbReference type="NCBIfam" id="NF009910">
    <property type="entry name" value="PRK13370.1-4"/>
    <property type="match status" value="1"/>
</dbReference>
<dbReference type="Pfam" id="PF02900">
    <property type="entry name" value="LigB"/>
    <property type="match status" value="1"/>
</dbReference>
<dbReference type="SUPFAM" id="SSF53213">
    <property type="entry name" value="LigB-like"/>
    <property type="match status" value="1"/>
</dbReference>
<comment type="function">
    <text evidence="1">Catalyzes the non-heme iron(II)-dependent oxidative cleavage of 2,3-dihydroxyphenylpropionic acid and 2,3-dihydroxicinnamic acid into 2-hydroxy-6-ketononadienedioate and 2-hydroxy-6-ketononatrienedioate, respectively.</text>
</comment>
<comment type="catalytic activity">
    <reaction evidence="1">
        <text>3-(2,3-dihydroxyphenyl)propanoate + O2 = (2Z,4E)-2-hydroxy-6-oxonona-2,4-dienedioate + H(+)</text>
        <dbReference type="Rhea" id="RHEA:23840"/>
        <dbReference type="ChEBI" id="CHEBI:15378"/>
        <dbReference type="ChEBI" id="CHEBI:15379"/>
        <dbReference type="ChEBI" id="CHEBI:46951"/>
        <dbReference type="ChEBI" id="CHEBI:66887"/>
        <dbReference type="EC" id="1.13.11.16"/>
    </reaction>
</comment>
<comment type="catalytic activity">
    <reaction evidence="1">
        <text>(2E)-3-(2,3-dihydroxyphenyl)prop-2-enoate + O2 = (2Z,4E,7E)-2-hydroxy-6-oxonona-2,4,7-trienedioate + H(+)</text>
        <dbReference type="Rhea" id="RHEA:25054"/>
        <dbReference type="ChEBI" id="CHEBI:15378"/>
        <dbReference type="ChEBI" id="CHEBI:15379"/>
        <dbReference type="ChEBI" id="CHEBI:58642"/>
        <dbReference type="ChEBI" id="CHEBI:66888"/>
        <dbReference type="EC" id="1.13.11.16"/>
    </reaction>
</comment>
<comment type="cofactor">
    <cofactor evidence="1">
        <name>Fe(2+)</name>
        <dbReference type="ChEBI" id="CHEBI:29033"/>
    </cofactor>
</comment>
<comment type="pathway">
    <text evidence="1">Aromatic compound metabolism; 3-phenylpropanoate degradation.</text>
</comment>
<comment type="subunit">
    <text evidence="1">Homotetramer.</text>
</comment>
<comment type="similarity">
    <text evidence="1">Belongs to the LigB/MhpB extradiol dioxygenase family.</text>
</comment>
<protein>
    <recommendedName>
        <fullName evidence="1">2,3-dihydroxyphenylpropionate/2,3-dihydroxicinnamic acid 1,2-dioxygenase</fullName>
        <ecNumber evidence="1">1.13.11.16</ecNumber>
    </recommendedName>
    <alternativeName>
        <fullName evidence="1">3-carboxyethylcatechol 2,3-dioxygenase</fullName>
    </alternativeName>
</protein>
<name>MHPB_MYCGI</name>
<gene>
    <name evidence="1" type="primary">mhpB</name>
    <name type="ordered locus">Mflv_2402</name>
</gene>
<reference key="1">
    <citation type="submission" date="2007-04" db="EMBL/GenBank/DDBJ databases">
        <title>Complete sequence of chromosome of Mycobacterium gilvum PYR-GCK.</title>
        <authorList>
            <consortium name="US DOE Joint Genome Institute"/>
            <person name="Copeland A."/>
            <person name="Lucas S."/>
            <person name="Lapidus A."/>
            <person name="Barry K."/>
            <person name="Detter J.C."/>
            <person name="Glavina del Rio T."/>
            <person name="Hammon N."/>
            <person name="Israni S."/>
            <person name="Dalin E."/>
            <person name="Tice H."/>
            <person name="Pitluck S."/>
            <person name="Chain P."/>
            <person name="Malfatti S."/>
            <person name="Shin M."/>
            <person name="Vergez L."/>
            <person name="Schmutz J."/>
            <person name="Larimer F."/>
            <person name="Land M."/>
            <person name="Hauser L."/>
            <person name="Kyrpides N."/>
            <person name="Mikhailova N."/>
            <person name="Miller C."/>
            <person name="Richardson P."/>
        </authorList>
    </citation>
    <scope>NUCLEOTIDE SEQUENCE [LARGE SCALE GENOMIC DNA]</scope>
    <source>
        <strain>PYR-GCK</strain>
    </source>
</reference>
<evidence type="ECO:0000255" key="1">
    <source>
        <dbReference type="HAMAP-Rule" id="MF_01653"/>
    </source>
</evidence>
<proteinExistence type="inferred from homology"/>